<organism>
    <name type="scientific">Malassezia furfur</name>
    <name type="common">Pityriasis versicolor infection agent</name>
    <name type="synonym">Pityrosporum furfur</name>
    <dbReference type="NCBI Taxonomy" id="55194"/>
    <lineage>
        <taxon>Eukaryota</taxon>
        <taxon>Fungi</taxon>
        <taxon>Dikarya</taxon>
        <taxon>Basidiomycota</taxon>
        <taxon>Ustilaginomycotina</taxon>
        <taxon>Malasseziomycetes</taxon>
        <taxon>Malasseziales</taxon>
        <taxon>Malasseziaceae</taxon>
        <taxon>Malassezia</taxon>
    </lineage>
</organism>
<sequence>EIGSTIPNATFAYVPYSPELEDHKVCGMPTSFQSHERWKGKKVVIVAVPGAFTPTCTANHVPPYVEKIQELKSKGVDEVVVISANDPFVLSAWGITEHAKDNLTFAQDVNCEFSKHFNATLDLSSKGMGLRTARYALIANDLKVEYFGIDEGEPKQSSAATVLSKL</sequence>
<reference key="1">
    <citation type="journal article" date="1998" name="Biochem. Biophys. Res. Commun.">
        <title>Identification and cloning of two novel allergens from the lipophilic yeast, Malassezia furfur.</title>
        <authorList>
            <person name="Yasueda H."/>
            <person name="Hashida-Okado T."/>
            <person name="Saito A."/>
            <person name="Uchida K."/>
            <person name="Kuroda M."/>
            <person name="Onishi Y."/>
            <person name="Takahashi K."/>
            <person name="Yamaguchi H."/>
            <person name="Takesako K."/>
            <person name="Akiyama K."/>
        </authorList>
    </citation>
    <scope>NUCLEOTIDE SEQUENCE [MRNA]</scope>
    <source>
        <strain>TIMM 2782</strain>
    </source>
</reference>
<comment type="function">
    <text evidence="2">Thiol-specific peroxidase that catalyzes the reduction of hydrogen peroxide and organic hydroperoxides to water and alcohols, respectively. Plays a role in cell protection against oxidative stress by detoxifying peroxides and as sensor of hydrogen peroxide-mediated signaling events.</text>
</comment>
<comment type="catalytic activity">
    <reaction evidence="2">
        <text>a hydroperoxide + [thioredoxin]-dithiol = an alcohol + [thioredoxin]-disulfide + H2O</text>
        <dbReference type="Rhea" id="RHEA:62620"/>
        <dbReference type="Rhea" id="RHEA-COMP:10698"/>
        <dbReference type="Rhea" id="RHEA-COMP:10700"/>
        <dbReference type="ChEBI" id="CHEBI:15377"/>
        <dbReference type="ChEBI" id="CHEBI:29950"/>
        <dbReference type="ChEBI" id="CHEBI:30879"/>
        <dbReference type="ChEBI" id="CHEBI:35924"/>
        <dbReference type="ChEBI" id="CHEBI:50058"/>
        <dbReference type="EC" id="1.11.1.24"/>
    </reaction>
</comment>
<comment type="subunit">
    <text evidence="2">Homodimer; disulfide-linked, upon oxidation.</text>
</comment>
<comment type="allergen">
    <text evidence="4">Causes an allergic reaction in human.</text>
</comment>
<comment type="miscellaneous">
    <text evidence="2">The active site is a conserved redox-active cysteine residue, the peroxidatic cysteine (C(P)), which makes the nucleophilic attack on the peroxide substrate. The peroxide oxidizes the C(P)-SH to cysteine sulfenic acid (C(P)-SOH), which then reacts with another cysteine residue, the resolving cysteine (C(R)), to form a disulfide bridge. The disulfide is subsequently reduced by an appropriate electron donor to complete the catalytic cycle. In this typical 2-Cys Prx, C(R) is provided by the other dimeric subunit to form an intersubunit disulfide. The disulfide is subsequently reduced by thioredoxin.</text>
</comment>
<comment type="similarity">
    <text evidence="5">Belongs to the peroxiredoxin family. Prx5 subfamily.</text>
</comment>
<evidence type="ECO:0000250" key="1"/>
<evidence type="ECO:0000250" key="2">
    <source>
        <dbReference type="UniProtKB" id="P38013"/>
    </source>
</evidence>
<evidence type="ECO:0000255" key="3">
    <source>
        <dbReference type="PROSITE-ProRule" id="PRU00691"/>
    </source>
</evidence>
<evidence type="ECO:0000269" key="4">
    <source>
    </source>
</evidence>
<evidence type="ECO:0000305" key="5"/>
<name>MALF3_MALFU</name>
<proteinExistence type="evidence at protein level"/>
<feature type="chain" id="PRO_0000056607" description="Putative peroxiredoxin">
    <location>
        <begin position="1" status="less than"/>
        <end position="166"/>
    </location>
</feature>
<feature type="domain" description="Thioredoxin" evidence="3">
    <location>
        <begin position="1" status="less than"/>
        <end position="166"/>
    </location>
</feature>
<feature type="short sequence motif" description="Microbody targeting signal" evidence="1">
    <location>
        <begin position="164"/>
        <end position="166"/>
    </location>
</feature>
<feature type="active site" description="Cysteine sulfenic acid (-SOH) intermediate" evidence="2">
    <location>
        <position position="56"/>
    </location>
</feature>
<feature type="disulfide bond" description="Interchain (with C-56); in linked form" evidence="2">
    <location>
        <position position="26"/>
    </location>
</feature>
<feature type="disulfide bond" description="Interchain (with C-26); in linked form" evidence="2">
    <location>
        <position position="56"/>
    </location>
</feature>
<feature type="non-terminal residue">
    <location>
        <position position="1"/>
    </location>
</feature>
<accession>P56578</accession>
<dbReference type="EC" id="1.11.1.24" evidence="2"/>
<dbReference type="EMBL" id="AB011805">
    <property type="protein sequence ID" value="BAA32436.1"/>
    <property type="molecule type" value="mRNA"/>
</dbReference>
<dbReference type="PIR" id="JE0227">
    <property type="entry name" value="JE0227"/>
</dbReference>
<dbReference type="SMR" id="P56578"/>
<dbReference type="Allergome" id="3362">
    <property type="allergen name" value="Mala f 3.0101"/>
</dbReference>
<dbReference type="Allergome" id="469">
    <property type="allergen name" value="Mala f 3"/>
</dbReference>
<dbReference type="GO" id="GO:0005739">
    <property type="term" value="C:mitochondrion"/>
    <property type="evidence" value="ECO:0007669"/>
    <property type="project" value="TreeGrafter"/>
</dbReference>
<dbReference type="GO" id="GO:0005777">
    <property type="term" value="C:peroxisome"/>
    <property type="evidence" value="ECO:0007669"/>
    <property type="project" value="TreeGrafter"/>
</dbReference>
<dbReference type="GO" id="GO:0008379">
    <property type="term" value="F:thioredoxin peroxidase activity"/>
    <property type="evidence" value="ECO:0007669"/>
    <property type="project" value="InterPro"/>
</dbReference>
<dbReference type="GO" id="GO:0045454">
    <property type="term" value="P:cell redox homeostasis"/>
    <property type="evidence" value="ECO:0007669"/>
    <property type="project" value="TreeGrafter"/>
</dbReference>
<dbReference type="GO" id="GO:0034599">
    <property type="term" value="P:cellular response to oxidative stress"/>
    <property type="evidence" value="ECO:0007669"/>
    <property type="project" value="InterPro"/>
</dbReference>
<dbReference type="GO" id="GO:0042744">
    <property type="term" value="P:hydrogen peroxide catabolic process"/>
    <property type="evidence" value="ECO:0007669"/>
    <property type="project" value="TreeGrafter"/>
</dbReference>
<dbReference type="CDD" id="cd03013">
    <property type="entry name" value="PRX5_like"/>
    <property type="match status" value="1"/>
</dbReference>
<dbReference type="FunFam" id="3.40.30.10:FF:000020">
    <property type="entry name" value="Peroxiredoxin"/>
    <property type="match status" value="1"/>
</dbReference>
<dbReference type="Gene3D" id="3.40.30.10">
    <property type="entry name" value="Glutaredoxin"/>
    <property type="match status" value="1"/>
</dbReference>
<dbReference type="InterPro" id="IPR037944">
    <property type="entry name" value="PRX5-like"/>
</dbReference>
<dbReference type="InterPro" id="IPR013740">
    <property type="entry name" value="Redoxin"/>
</dbReference>
<dbReference type="InterPro" id="IPR036249">
    <property type="entry name" value="Thioredoxin-like_sf"/>
</dbReference>
<dbReference type="InterPro" id="IPR013766">
    <property type="entry name" value="Thioredoxin_domain"/>
</dbReference>
<dbReference type="PANTHER" id="PTHR10430">
    <property type="entry name" value="PEROXIREDOXIN"/>
    <property type="match status" value="1"/>
</dbReference>
<dbReference type="PANTHER" id="PTHR10430:SF16">
    <property type="entry name" value="PEROXIREDOXIN-5, MITOCHONDRIAL"/>
    <property type="match status" value="1"/>
</dbReference>
<dbReference type="Pfam" id="PF08534">
    <property type="entry name" value="Redoxin"/>
    <property type="match status" value="1"/>
</dbReference>
<dbReference type="SUPFAM" id="SSF52833">
    <property type="entry name" value="Thioredoxin-like"/>
    <property type="match status" value="1"/>
</dbReference>
<dbReference type="PROSITE" id="PS51352">
    <property type="entry name" value="THIOREDOXIN_2"/>
    <property type="match status" value="1"/>
</dbReference>
<keyword id="KW-0020">Allergen</keyword>
<keyword id="KW-0049">Antioxidant</keyword>
<keyword id="KW-1015">Disulfide bond</keyword>
<keyword id="KW-0560">Oxidoreductase</keyword>
<keyword id="KW-0575">Peroxidase</keyword>
<keyword id="KW-0676">Redox-active center</keyword>
<protein>
    <recommendedName>
        <fullName>Putative peroxiredoxin</fullName>
        <ecNumber evidence="2">1.11.1.24</ecNumber>
    </recommendedName>
    <alternativeName>
        <fullName>MF2</fullName>
    </alternativeName>
    <alternativeName>
        <fullName>Thioredoxin reductase</fullName>
    </alternativeName>
    <alternativeName>
        <fullName evidence="5">Thioredoxin-dependent peroxiredoxin</fullName>
    </alternativeName>
    <allergenName>Mal f 3</allergenName>
</protein>